<name>RSSA_PLAYO</name>
<reference key="1">
    <citation type="journal article" date="2002" name="Nature">
        <title>Genome sequence and comparative analysis of the model rodent malaria parasite Plasmodium yoelii yoelii.</title>
        <authorList>
            <person name="Carlton J.M."/>
            <person name="Angiuoli S.V."/>
            <person name="Suh B.B."/>
            <person name="Kooij T.W."/>
            <person name="Pertea M."/>
            <person name="Silva J.C."/>
            <person name="Ermolaeva M.D."/>
            <person name="Allen J.E."/>
            <person name="Selengut J.D."/>
            <person name="Koo H.L."/>
            <person name="Peterson J.D."/>
            <person name="Pop M."/>
            <person name="Kosack D.S."/>
            <person name="Shumway M.F."/>
            <person name="Bidwell S.L."/>
            <person name="Shallom S.J."/>
            <person name="van Aken S.E."/>
            <person name="Riedmuller S.B."/>
            <person name="Feldblyum T.V."/>
            <person name="Cho J.K."/>
            <person name="Quackenbush J."/>
            <person name="Sedegah M."/>
            <person name="Shoaibi A."/>
            <person name="Cummings L.M."/>
            <person name="Florens L."/>
            <person name="Yates J.R. III"/>
            <person name="Raine J.D."/>
            <person name="Sinden R.E."/>
            <person name="Harris M.A."/>
            <person name="Cunningham D.A."/>
            <person name="Preiser P.R."/>
            <person name="Bergman L.W."/>
            <person name="Vaidya A.B."/>
            <person name="van Lin L.H."/>
            <person name="Janse C.J."/>
            <person name="Waters A.P."/>
            <person name="Smith H.O."/>
            <person name="White O.R."/>
            <person name="Salzberg S.L."/>
            <person name="Venter J.C."/>
            <person name="Fraser C.M."/>
            <person name="Hoffman S.L."/>
            <person name="Gardner M.J."/>
            <person name="Carucci D.J."/>
        </authorList>
    </citation>
    <scope>NUCLEOTIDE SEQUENCE [LARGE SCALE GENOMIC DNA]</scope>
    <source>
        <strain>17XNL</strain>
    </source>
</reference>
<accession>Q7RBT0</accession>
<proteinExistence type="inferred from homology"/>
<sequence>MSNKKVQSPKEESIAKMLICKVHIGTKNLENKMKRYVYTRAKDGVHIINLAKTYEKLQLAARVIVAVSNPADVVVVSARPFGSRAVLKFAQYTGAQAIAGRWTPGMLTNQIIQKFIEPRLLIVTDPRTDAQSVKESAYANIPVIALCDSDSPLEHVDIAIPCNNKGKESIALMYWLLAQEVLYLKGTIPRSQAWDVMVDMFLWRDPEQFELKNLANEEATPTAPHLADNQYATEAPYDDWNKKDDWNDNANEEWKNPITVDEW</sequence>
<keyword id="KW-0963">Cytoplasm</keyword>
<keyword id="KW-1185">Reference proteome</keyword>
<keyword id="KW-0687">Ribonucleoprotein</keyword>
<keyword id="KW-0689">Ribosomal protein</keyword>
<protein>
    <recommendedName>
        <fullName evidence="1">Small ribosomal subunit protein uS2</fullName>
    </recommendedName>
    <alternativeName>
        <fullName evidence="3">40S ribosomal protein SA</fullName>
    </alternativeName>
</protein>
<comment type="function">
    <text evidence="1">Required for the assembly and/or stability of the 40S ribosomal subunit. Required for the processing of the 20S rRNA-precursor to mature 18S rRNA in a late step of the maturation of 40S ribosomal subunits.</text>
</comment>
<comment type="subunit">
    <text evidence="1">Component of the small ribosomal subunit. Mature ribosomes consist of a small (40S) and a large (60S) subunit. The 40S subunit contains about 33 different proteins and 1 molecule of RNA (18S). The 60S subunit contains about 49 different proteins and 3 molecules of RNA (25S, 5.8S and 5S). Interacts with ribosomal protein S21.</text>
</comment>
<comment type="subcellular location">
    <subcellularLocation>
        <location evidence="1">Cytoplasm</location>
    </subcellularLocation>
</comment>
<comment type="similarity">
    <text evidence="1">Belongs to the universal ribosomal protein uS2 family.</text>
</comment>
<organism>
    <name type="scientific">Plasmodium yoelii yoelii</name>
    <dbReference type="NCBI Taxonomy" id="73239"/>
    <lineage>
        <taxon>Eukaryota</taxon>
        <taxon>Sar</taxon>
        <taxon>Alveolata</taxon>
        <taxon>Apicomplexa</taxon>
        <taxon>Aconoidasida</taxon>
        <taxon>Haemosporida</taxon>
        <taxon>Plasmodiidae</taxon>
        <taxon>Plasmodium</taxon>
        <taxon>Plasmodium (Vinckeia)</taxon>
    </lineage>
</organism>
<evidence type="ECO:0000255" key="1">
    <source>
        <dbReference type="HAMAP-Rule" id="MF_03015"/>
    </source>
</evidence>
<evidence type="ECO:0000256" key="2">
    <source>
        <dbReference type="SAM" id="MobiDB-lite"/>
    </source>
</evidence>
<evidence type="ECO:0000305" key="3"/>
<feature type="chain" id="PRO_0000371610" description="Small ribosomal subunit protein uS2">
    <location>
        <begin position="1"/>
        <end position="263"/>
    </location>
</feature>
<feature type="region of interest" description="Disordered" evidence="2">
    <location>
        <begin position="237"/>
        <end position="263"/>
    </location>
</feature>
<gene>
    <name type="ORF">PY06059</name>
</gene>
<dbReference type="EMBL" id="AABL01002012">
    <property type="protein sequence ID" value="EAA18207.1"/>
    <property type="molecule type" value="Genomic_DNA"/>
</dbReference>
<dbReference type="SMR" id="Q7RBT0"/>
<dbReference type="STRING" id="73239.Q7RBT0"/>
<dbReference type="PaxDb" id="73239-Q7RBT0"/>
<dbReference type="EnsemblProtists" id="EAA18207">
    <property type="protein sequence ID" value="EAA18207"/>
    <property type="gene ID" value="EAA18207"/>
</dbReference>
<dbReference type="KEGG" id="pyo:PY17X_0512000"/>
<dbReference type="VEuPathDB" id="PlasmoDB:Py17XNL_000504475"/>
<dbReference type="InParanoid" id="Q7RBT0"/>
<dbReference type="Proteomes" id="UP000008553">
    <property type="component" value="Unassembled WGS sequence"/>
</dbReference>
<dbReference type="GO" id="GO:0022627">
    <property type="term" value="C:cytosolic small ribosomal subunit"/>
    <property type="evidence" value="ECO:0007669"/>
    <property type="project" value="UniProtKB-UniRule"/>
</dbReference>
<dbReference type="GO" id="GO:0003735">
    <property type="term" value="F:structural constituent of ribosome"/>
    <property type="evidence" value="ECO:0007669"/>
    <property type="project" value="UniProtKB-UniRule"/>
</dbReference>
<dbReference type="GO" id="GO:0000028">
    <property type="term" value="P:ribosomal small subunit assembly"/>
    <property type="evidence" value="ECO:0007669"/>
    <property type="project" value="UniProtKB-UniRule"/>
</dbReference>
<dbReference type="GO" id="GO:0006412">
    <property type="term" value="P:translation"/>
    <property type="evidence" value="ECO:0007669"/>
    <property type="project" value="UniProtKB-UniRule"/>
</dbReference>
<dbReference type="CDD" id="cd01425">
    <property type="entry name" value="RPS2"/>
    <property type="match status" value="1"/>
</dbReference>
<dbReference type="FunFam" id="3.40.50.10490:FF:000012">
    <property type="entry name" value="40S ribosomal protein SA"/>
    <property type="match status" value="1"/>
</dbReference>
<dbReference type="Gene3D" id="3.40.50.10490">
    <property type="entry name" value="Glucose-6-phosphate isomerase like protein, domain 1"/>
    <property type="match status" value="1"/>
</dbReference>
<dbReference type="HAMAP" id="MF_03015">
    <property type="entry name" value="Ribosomal_S2_euk"/>
    <property type="match status" value="1"/>
</dbReference>
<dbReference type="InterPro" id="IPR001865">
    <property type="entry name" value="Ribosomal_uS2"/>
</dbReference>
<dbReference type="InterPro" id="IPR018130">
    <property type="entry name" value="Ribosomal_uS2_CS"/>
</dbReference>
<dbReference type="InterPro" id="IPR027498">
    <property type="entry name" value="Ribosomal_uS2_euk"/>
</dbReference>
<dbReference type="InterPro" id="IPR005707">
    <property type="entry name" value="Ribosomal_uS2_euk/arc"/>
</dbReference>
<dbReference type="InterPro" id="IPR023591">
    <property type="entry name" value="Ribosomal_uS2_flav_dom_sf"/>
</dbReference>
<dbReference type="NCBIfam" id="TIGR01012">
    <property type="entry name" value="uS2_euk_arch"/>
    <property type="match status" value="1"/>
</dbReference>
<dbReference type="PANTHER" id="PTHR11489">
    <property type="entry name" value="40S RIBOSOMAL PROTEIN SA"/>
    <property type="match status" value="1"/>
</dbReference>
<dbReference type="Pfam" id="PF00318">
    <property type="entry name" value="Ribosomal_S2"/>
    <property type="match status" value="2"/>
</dbReference>
<dbReference type="PRINTS" id="PR00395">
    <property type="entry name" value="RIBOSOMALS2"/>
</dbReference>
<dbReference type="SUPFAM" id="SSF52313">
    <property type="entry name" value="Ribosomal protein S2"/>
    <property type="match status" value="1"/>
</dbReference>
<dbReference type="PROSITE" id="PS00962">
    <property type="entry name" value="RIBOSOMAL_S2_1"/>
    <property type="match status" value="1"/>
</dbReference>
<dbReference type="PROSITE" id="PS00963">
    <property type="entry name" value="RIBOSOMAL_S2_2"/>
    <property type="match status" value="1"/>
</dbReference>